<dbReference type="EC" id="2.7.7.105" evidence="1"/>
<dbReference type="EMBL" id="CP001825">
    <property type="protein sequence ID" value="ACZ42769.1"/>
    <property type="molecule type" value="Genomic_DNA"/>
</dbReference>
<dbReference type="SMR" id="D1CDA4"/>
<dbReference type="STRING" id="525904.Tter_1863"/>
<dbReference type="KEGG" id="ttr:Tter_1863"/>
<dbReference type="eggNOG" id="COG1920">
    <property type="taxonomic scope" value="Bacteria"/>
</dbReference>
<dbReference type="HOGENOM" id="CLU_076569_1_0_0"/>
<dbReference type="UniPathway" id="UPA00071"/>
<dbReference type="Proteomes" id="UP000000323">
    <property type="component" value="Chromosome 1"/>
</dbReference>
<dbReference type="GO" id="GO:0005525">
    <property type="term" value="F:GTP binding"/>
    <property type="evidence" value="ECO:0007669"/>
    <property type="project" value="UniProtKB-KW"/>
</dbReference>
<dbReference type="GO" id="GO:0043814">
    <property type="term" value="F:phospholactate guanylyltransferase activity"/>
    <property type="evidence" value="ECO:0007669"/>
    <property type="project" value="InterPro"/>
</dbReference>
<dbReference type="GO" id="GO:0052645">
    <property type="term" value="P:F420-0 metabolic process"/>
    <property type="evidence" value="ECO:0007669"/>
    <property type="project" value="UniProtKB-UniRule"/>
</dbReference>
<dbReference type="Gene3D" id="3.90.550.10">
    <property type="entry name" value="Spore Coat Polysaccharide Biosynthesis Protein SpsA, Chain A"/>
    <property type="match status" value="1"/>
</dbReference>
<dbReference type="HAMAP" id="MF_02114">
    <property type="entry name" value="CofC"/>
    <property type="match status" value="1"/>
</dbReference>
<dbReference type="InterPro" id="IPR002835">
    <property type="entry name" value="CofC"/>
</dbReference>
<dbReference type="InterPro" id="IPR029044">
    <property type="entry name" value="Nucleotide-diphossugar_trans"/>
</dbReference>
<dbReference type="NCBIfam" id="TIGR03552">
    <property type="entry name" value="F420_cofC"/>
    <property type="match status" value="1"/>
</dbReference>
<dbReference type="PANTHER" id="PTHR40392">
    <property type="entry name" value="2-PHOSPHO-L-LACTATE GUANYLYLTRANSFERASE"/>
    <property type="match status" value="1"/>
</dbReference>
<dbReference type="PANTHER" id="PTHR40392:SF1">
    <property type="entry name" value="2-PHOSPHO-L-LACTATE GUANYLYLTRANSFERASE"/>
    <property type="match status" value="1"/>
</dbReference>
<dbReference type="Pfam" id="PF01983">
    <property type="entry name" value="CofC"/>
    <property type="match status" value="1"/>
</dbReference>
<dbReference type="SUPFAM" id="SSF53448">
    <property type="entry name" value="Nucleotide-diphospho-sugar transferases"/>
    <property type="match status" value="1"/>
</dbReference>
<comment type="function">
    <text evidence="1">Guanylyltransferase that catalyzes the activation of phosphoenolpyruvate (PEP) as enolpyruvoyl-2-diphospho-5'-guanosine, via the condensation of PEP with GTP. It is involved in the biosynthesis of coenzyme F420, a hydride carrier cofactor.</text>
</comment>
<comment type="catalytic activity">
    <reaction evidence="1">
        <text>phosphoenolpyruvate + GTP + H(+) = enolpyruvoyl-2-diphospho-5'-guanosine + diphosphate</text>
        <dbReference type="Rhea" id="RHEA:30519"/>
        <dbReference type="ChEBI" id="CHEBI:15378"/>
        <dbReference type="ChEBI" id="CHEBI:33019"/>
        <dbReference type="ChEBI" id="CHEBI:37565"/>
        <dbReference type="ChEBI" id="CHEBI:58702"/>
        <dbReference type="ChEBI" id="CHEBI:143701"/>
        <dbReference type="EC" id="2.7.7.105"/>
    </reaction>
</comment>
<comment type="pathway">
    <text evidence="1">Cofactor biosynthesis; coenzyme F420 biosynthesis.</text>
</comment>
<comment type="miscellaneous">
    <text evidence="2">The exact nature of the substrate is currently not known. This entry has been annotated based on its similarity to Actinobacteria.</text>
</comment>
<comment type="similarity">
    <text evidence="1">Belongs to the CofC family.</text>
</comment>
<keyword id="KW-0342">GTP-binding</keyword>
<keyword id="KW-0547">Nucleotide-binding</keyword>
<keyword id="KW-0548">Nucleotidyltransferase</keyword>
<keyword id="KW-1185">Reference proteome</keyword>
<keyword id="KW-0808">Transferase</keyword>
<accession>D1CDA4</accession>
<sequence length="230" mass="25358">MSAMNIAVLVPVKKLDKAKMRMADTLDRSQRRQLMMVTLRRVLSALQKAQIGDVYLVASDPQVKNIACDLCVKFIPDQGDELNPSLELARGELCQNYDALLVVFGDLPMISDKDIKTIVRLGSSKPSCVIAPDKRNVGTNVLFLHPPYLLPFTFGGNSYERFRSNCEKLGVQFLVYQSQNTALDLDYPQDILDLAALRGHKISGLEEILDPGVLAQISQVTSMSGAKMGA</sequence>
<protein>
    <recommendedName>
        <fullName evidence="1">Phosphoenolpyruvate guanylyltransferase</fullName>
        <shortName evidence="1">PEP guanylyltransferase</shortName>
        <ecNumber evidence="1">2.7.7.105</ecNumber>
    </recommendedName>
</protein>
<organism>
    <name type="scientific">Thermobaculum terrenum (strain ATCC BAA-798 / CCMEE 7001 / YNP1)</name>
    <dbReference type="NCBI Taxonomy" id="525904"/>
    <lineage>
        <taxon>Bacteria</taxon>
        <taxon>Bacillati</taxon>
        <taxon>Chloroflexota</taxon>
        <taxon>Chloroflexia</taxon>
        <taxon>Candidatus Thermobaculales</taxon>
        <taxon>Candidatus Thermobaculaceae</taxon>
        <taxon>Thermobaculum</taxon>
    </lineage>
</organism>
<name>FBID_THET1</name>
<proteinExistence type="inferred from homology"/>
<reference key="1">
    <citation type="journal article" date="2010" name="Stand. Genomic Sci.">
        <title>Complete genome sequence of 'Thermobaculum terrenum' type strain (YNP1).</title>
        <authorList>
            <person name="Kiss H."/>
            <person name="Cleland D."/>
            <person name="Lapidus A."/>
            <person name="Lucas S."/>
            <person name="Del Rio T.G."/>
            <person name="Nolan M."/>
            <person name="Tice H."/>
            <person name="Han C."/>
            <person name="Goodwin L."/>
            <person name="Pitluck S."/>
            <person name="Liolios K."/>
            <person name="Ivanova N."/>
            <person name="Mavromatis K."/>
            <person name="Ovchinnikova G."/>
            <person name="Pati A."/>
            <person name="Chen A."/>
            <person name="Palaniappan K."/>
            <person name="Land M."/>
            <person name="Hauser L."/>
            <person name="Chang Y.J."/>
            <person name="Jeffries C.D."/>
            <person name="Lu M."/>
            <person name="Brettin T."/>
            <person name="Detter J.C."/>
            <person name="Goeker M."/>
            <person name="Tindall B.J."/>
            <person name="Beck B."/>
            <person name="McDermott T.R."/>
            <person name="Woyke T."/>
            <person name="Bristow J."/>
            <person name="Eisen J.A."/>
            <person name="Markowitz V."/>
            <person name="Hugenholtz P."/>
            <person name="Kyrpides N.C."/>
            <person name="Klenk H.P."/>
            <person name="Cheng J.F."/>
        </authorList>
    </citation>
    <scope>NUCLEOTIDE SEQUENCE [LARGE SCALE GENOMIC DNA]</scope>
    <source>
        <strain>ATCC BAA-798 / CCMEE 7001 / YNP1</strain>
    </source>
</reference>
<feature type="chain" id="PRO_0000398719" description="Phosphoenolpyruvate guanylyltransferase">
    <location>
        <begin position="1"/>
        <end position="230"/>
    </location>
</feature>
<feature type="binding site" evidence="1">
    <location>
        <position position="139"/>
    </location>
    <ligand>
        <name>phosphoenolpyruvate</name>
        <dbReference type="ChEBI" id="CHEBI:58702"/>
    </ligand>
</feature>
<feature type="binding site" evidence="1">
    <location>
        <position position="155"/>
    </location>
    <ligand>
        <name>phosphoenolpyruvate</name>
        <dbReference type="ChEBI" id="CHEBI:58702"/>
    </ligand>
</feature>
<feature type="binding site" evidence="1">
    <location>
        <position position="158"/>
    </location>
    <ligand>
        <name>phosphoenolpyruvate</name>
        <dbReference type="ChEBI" id="CHEBI:58702"/>
    </ligand>
</feature>
<gene>
    <name evidence="1" type="primary">fbiD</name>
    <name type="ordered locus">Tter_1863</name>
</gene>
<evidence type="ECO:0000255" key="1">
    <source>
        <dbReference type="HAMAP-Rule" id="MF_02114"/>
    </source>
</evidence>
<evidence type="ECO:0000305" key="2"/>